<proteinExistence type="inferred from homology"/>
<gene>
    <name evidence="1" type="primary">rlmH</name>
    <name type="ordered locus">LMOf2365_0314</name>
</gene>
<reference key="1">
    <citation type="journal article" date="2004" name="Nucleic Acids Res.">
        <title>Whole genome comparisons of serotype 4b and 1/2a strains of the food-borne pathogen Listeria monocytogenes reveal new insights into the core genome components of this species.</title>
        <authorList>
            <person name="Nelson K.E."/>
            <person name="Fouts D.E."/>
            <person name="Mongodin E.F."/>
            <person name="Ravel J."/>
            <person name="DeBoy R.T."/>
            <person name="Kolonay J.F."/>
            <person name="Rasko D.A."/>
            <person name="Angiuoli S.V."/>
            <person name="Gill S.R."/>
            <person name="Paulsen I.T."/>
            <person name="Peterson J.D."/>
            <person name="White O."/>
            <person name="Nelson W.C."/>
            <person name="Nierman W.C."/>
            <person name="Beanan M.J."/>
            <person name="Brinkac L.M."/>
            <person name="Daugherty S.C."/>
            <person name="Dodson R.J."/>
            <person name="Durkin A.S."/>
            <person name="Madupu R."/>
            <person name="Haft D.H."/>
            <person name="Selengut J."/>
            <person name="Van Aken S.E."/>
            <person name="Khouri H.M."/>
            <person name="Fedorova N."/>
            <person name="Forberger H.A."/>
            <person name="Tran B."/>
            <person name="Kathariou S."/>
            <person name="Wonderling L.D."/>
            <person name="Uhlich G.A."/>
            <person name="Bayles D.O."/>
            <person name="Luchansky J.B."/>
            <person name="Fraser C.M."/>
        </authorList>
    </citation>
    <scope>NUCLEOTIDE SEQUENCE [LARGE SCALE GENOMIC DNA]</scope>
    <source>
        <strain>F2365</strain>
    </source>
</reference>
<evidence type="ECO:0000255" key="1">
    <source>
        <dbReference type="HAMAP-Rule" id="MF_00658"/>
    </source>
</evidence>
<name>RLMH_LISMF</name>
<sequence length="159" mass="17741">MNIQIVTVGKLKEKYLVQGIAEYLKRLSAYAKVTIVEVPDEKAPEVLSDAEMKQVKDKEGARILAKIPDDAHVIALAIDGKMKSSEEFAADLDKLATYGKSKVTFVIGGSLGLSEAVLKRSNERISFGRLTLPHQLMRLVLVEQVYRAFRIVRGEPYHK</sequence>
<feature type="chain" id="PRO_0000198139" description="Ribosomal RNA large subunit methyltransferase H">
    <location>
        <begin position="1"/>
        <end position="159"/>
    </location>
</feature>
<feature type="binding site" evidence="1">
    <location>
        <position position="76"/>
    </location>
    <ligand>
        <name>S-adenosyl-L-methionine</name>
        <dbReference type="ChEBI" id="CHEBI:59789"/>
    </ligand>
</feature>
<feature type="binding site" evidence="1">
    <location>
        <position position="108"/>
    </location>
    <ligand>
        <name>S-adenosyl-L-methionine</name>
        <dbReference type="ChEBI" id="CHEBI:59789"/>
    </ligand>
</feature>
<feature type="binding site" evidence="1">
    <location>
        <begin position="127"/>
        <end position="132"/>
    </location>
    <ligand>
        <name>S-adenosyl-L-methionine</name>
        <dbReference type="ChEBI" id="CHEBI:59789"/>
    </ligand>
</feature>
<organism>
    <name type="scientific">Listeria monocytogenes serotype 4b (strain F2365)</name>
    <dbReference type="NCBI Taxonomy" id="265669"/>
    <lineage>
        <taxon>Bacteria</taxon>
        <taxon>Bacillati</taxon>
        <taxon>Bacillota</taxon>
        <taxon>Bacilli</taxon>
        <taxon>Bacillales</taxon>
        <taxon>Listeriaceae</taxon>
        <taxon>Listeria</taxon>
    </lineage>
</organism>
<comment type="function">
    <text evidence="1">Specifically methylates the pseudouridine at position 1915 (m3Psi1915) in 23S rRNA.</text>
</comment>
<comment type="catalytic activity">
    <reaction evidence="1">
        <text>pseudouridine(1915) in 23S rRNA + S-adenosyl-L-methionine = N(3)-methylpseudouridine(1915) in 23S rRNA + S-adenosyl-L-homocysteine + H(+)</text>
        <dbReference type="Rhea" id="RHEA:42752"/>
        <dbReference type="Rhea" id="RHEA-COMP:10221"/>
        <dbReference type="Rhea" id="RHEA-COMP:10222"/>
        <dbReference type="ChEBI" id="CHEBI:15378"/>
        <dbReference type="ChEBI" id="CHEBI:57856"/>
        <dbReference type="ChEBI" id="CHEBI:59789"/>
        <dbReference type="ChEBI" id="CHEBI:65314"/>
        <dbReference type="ChEBI" id="CHEBI:74486"/>
        <dbReference type="EC" id="2.1.1.177"/>
    </reaction>
</comment>
<comment type="subunit">
    <text evidence="1">Homodimer.</text>
</comment>
<comment type="subcellular location">
    <subcellularLocation>
        <location evidence="1">Cytoplasm</location>
    </subcellularLocation>
</comment>
<comment type="similarity">
    <text evidence="1">Belongs to the RNA methyltransferase RlmH family.</text>
</comment>
<keyword id="KW-0963">Cytoplasm</keyword>
<keyword id="KW-0489">Methyltransferase</keyword>
<keyword id="KW-0698">rRNA processing</keyword>
<keyword id="KW-0949">S-adenosyl-L-methionine</keyword>
<keyword id="KW-0808">Transferase</keyword>
<protein>
    <recommendedName>
        <fullName evidence="1">Ribosomal RNA large subunit methyltransferase H</fullName>
        <ecNumber evidence="1">2.1.1.177</ecNumber>
    </recommendedName>
    <alternativeName>
        <fullName evidence="1">23S rRNA (pseudouridine1915-N3)-methyltransferase</fullName>
    </alternativeName>
    <alternativeName>
        <fullName evidence="1">23S rRNA m3Psi1915 methyltransferase</fullName>
    </alternativeName>
    <alternativeName>
        <fullName evidence="1">rRNA (pseudouridine-N3-)-methyltransferase RlmH</fullName>
    </alternativeName>
</protein>
<accession>Q724B0</accession>
<dbReference type="EC" id="2.1.1.177" evidence="1"/>
<dbReference type="EMBL" id="AE017262">
    <property type="protein sequence ID" value="AAT03101.1"/>
    <property type="molecule type" value="Genomic_DNA"/>
</dbReference>
<dbReference type="RefSeq" id="WP_003722913.1">
    <property type="nucleotide sequence ID" value="NC_002973.6"/>
</dbReference>
<dbReference type="SMR" id="Q724B0"/>
<dbReference type="KEGG" id="lmf:LMOf2365_0314"/>
<dbReference type="HOGENOM" id="CLU_100552_0_0_9"/>
<dbReference type="GO" id="GO:0005737">
    <property type="term" value="C:cytoplasm"/>
    <property type="evidence" value="ECO:0007669"/>
    <property type="project" value="UniProtKB-SubCell"/>
</dbReference>
<dbReference type="GO" id="GO:0070038">
    <property type="term" value="F:rRNA (pseudouridine-N3-)-methyltransferase activity"/>
    <property type="evidence" value="ECO:0007669"/>
    <property type="project" value="UniProtKB-UniRule"/>
</dbReference>
<dbReference type="CDD" id="cd18081">
    <property type="entry name" value="RlmH-like"/>
    <property type="match status" value="1"/>
</dbReference>
<dbReference type="Gene3D" id="3.40.1280.10">
    <property type="match status" value="1"/>
</dbReference>
<dbReference type="HAMAP" id="MF_00658">
    <property type="entry name" value="23SrRNA_methyltr_H"/>
    <property type="match status" value="1"/>
</dbReference>
<dbReference type="InterPro" id="IPR029028">
    <property type="entry name" value="Alpha/beta_knot_MTases"/>
</dbReference>
<dbReference type="InterPro" id="IPR003742">
    <property type="entry name" value="RlmH-like"/>
</dbReference>
<dbReference type="InterPro" id="IPR029026">
    <property type="entry name" value="tRNA_m1G_MTases_N"/>
</dbReference>
<dbReference type="NCBIfam" id="NF000985">
    <property type="entry name" value="PRK00103.1-3"/>
    <property type="match status" value="1"/>
</dbReference>
<dbReference type="NCBIfam" id="TIGR00246">
    <property type="entry name" value="tRNA_RlmH_YbeA"/>
    <property type="match status" value="1"/>
</dbReference>
<dbReference type="PANTHER" id="PTHR33603">
    <property type="entry name" value="METHYLTRANSFERASE"/>
    <property type="match status" value="1"/>
</dbReference>
<dbReference type="PANTHER" id="PTHR33603:SF1">
    <property type="entry name" value="RIBOSOMAL RNA LARGE SUBUNIT METHYLTRANSFERASE H"/>
    <property type="match status" value="1"/>
</dbReference>
<dbReference type="Pfam" id="PF02590">
    <property type="entry name" value="SPOUT_MTase"/>
    <property type="match status" value="1"/>
</dbReference>
<dbReference type="PIRSF" id="PIRSF004505">
    <property type="entry name" value="MT_bac"/>
    <property type="match status" value="1"/>
</dbReference>
<dbReference type="SUPFAM" id="SSF75217">
    <property type="entry name" value="alpha/beta knot"/>
    <property type="match status" value="1"/>
</dbReference>